<organism>
    <name type="scientific">Homo sapiens</name>
    <name type="common">Human</name>
    <dbReference type="NCBI Taxonomy" id="9606"/>
    <lineage>
        <taxon>Eukaryota</taxon>
        <taxon>Metazoa</taxon>
        <taxon>Chordata</taxon>
        <taxon>Craniata</taxon>
        <taxon>Vertebrata</taxon>
        <taxon>Euteleostomi</taxon>
        <taxon>Mammalia</taxon>
        <taxon>Eutheria</taxon>
        <taxon>Euarchontoglires</taxon>
        <taxon>Primates</taxon>
        <taxon>Haplorrhini</taxon>
        <taxon>Catarrhini</taxon>
        <taxon>Hominidae</taxon>
        <taxon>Homo</taxon>
    </lineage>
</organism>
<proteinExistence type="evidence at protein level"/>
<reference key="1">
    <citation type="journal article" date="2004" name="Nat. Genet.">
        <title>Complete sequencing and characterization of 21,243 full-length human cDNAs.</title>
        <authorList>
            <person name="Ota T."/>
            <person name="Suzuki Y."/>
            <person name="Nishikawa T."/>
            <person name="Otsuki T."/>
            <person name="Sugiyama T."/>
            <person name="Irie R."/>
            <person name="Wakamatsu A."/>
            <person name="Hayashi K."/>
            <person name="Sato H."/>
            <person name="Nagai K."/>
            <person name="Kimura K."/>
            <person name="Makita H."/>
            <person name="Sekine M."/>
            <person name="Obayashi M."/>
            <person name="Nishi T."/>
            <person name="Shibahara T."/>
            <person name="Tanaka T."/>
            <person name="Ishii S."/>
            <person name="Yamamoto J."/>
            <person name="Saito K."/>
            <person name="Kawai Y."/>
            <person name="Isono Y."/>
            <person name="Nakamura Y."/>
            <person name="Nagahari K."/>
            <person name="Murakami K."/>
            <person name="Yasuda T."/>
            <person name="Iwayanagi T."/>
            <person name="Wagatsuma M."/>
            <person name="Shiratori A."/>
            <person name="Sudo H."/>
            <person name="Hosoiri T."/>
            <person name="Kaku Y."/>
            <person name="Kodaira H."/>
            <person name="Kondo H."/>
            <person name="Sugawara M."/>
            <person name="Takahashi M."/>
            <person name="Kanda K."/>
            <person name="Yokoi T."/>
            <person name="Furuya T."/>
            <person name="Kikkawa E."/>
            <person name="Omura Y."/>
            <person name="Abe K."/>
            <person name="Kamihara K."/>
            <person name="Katsuta N."/>
            <person name="Sato K."/>
            <person name="Tanikawa M."/>
            <person name="Yamazaki M."/>
            <person name="Ninomiya K."/>
            <person name="Ishibashi T."/>
            <person name="Yamashita H."/>
            <person name="Murakawa K."/>
            <person name="Fujimori K."/>
            <person name="Tanai H."/>
            <person name="Kimata M."/>
            <person name="Watanabe M."/>
            <person name="Hiraoka S."/>
            <person name="Chiba Y."/>
            <person name="Ishida S."/>
            <person name="Ono Y."/>
            <person name="Takiguchi S."/>
            <person name="Watanabe S."/>
            <person name="Yosida M."/>
            <person name="Hotuta T."/>
            <person name="Kusano J."/>
            <person name="Kanehori K."/>
            <person name="Takahashi-Fujii A."/>
            <person name="Hara H."/>
            <person name="Tanase T.-O."/>
            <person name="Nomura Y."/>
            <person name="Togiya S."/>
            <person name="Komai F."/>
            <person name="Hara R."/>
            <person name="Takeuchi K."/>
            <person name="Arita M."/>
            <person name="Imose N."/>
            <person name="Musashino K."/>
            <person name="Yuuki H."/>
            <person name="Oshima A."/>
            <person name="Sasaki N."/>
            <person name="Aotsuka S."/>
            <person name="Yoshikawa Y."/>
            <person name="Matsunawa H."/>
            <person name="Ichihara T."/>
            <person name="Shiohata N."/>
            <person name="Sano S."/>
            <person name="Moriya S."/>
            <person name="Momiyama H."/>
            <person name="Satoh N."/>
            <person name="Takami S."/>
            <person name="Terashima Y."/>
            <person name="Suzuki O."/>
            <person name="Nakagawa S."/>
            <person name="Senoh A."/>
            <person name="Mizoguchi H."/>
            <person name="Goto Y."/>
            <person name="Shimizu F."/>
            <person name="Wakebe H."/>
            <person name="Hishigaki H."/>
            <person name="Watanabe T."/>
            <person name="Sugiyama A."/>
            <person name="Takemoto M."/>
            <person name="Kawakami B."/>
            <person name="Yamazaki M."/>
            <person name="Watanabe K."/>
            <person name="Kumagai A."/>
            <person name="Itakura S."/>
            <person name="Fukuzumi Y."/>
            <person name="Fujimori Y."/>
            <person name="Komiyama M."/>
            <person name="Tashiro H."/>
            <person name="Tanigami A."/>
            <person name="Fujiwara T."/>
            <person name="Ono T."/>
            <person name="Yamada K."/>
            <person name="Fujii Y."/>
            <person name="Ozaki K."/>
            <person name="Hirao M."/>
            <person name="Ohmori Y."/>
            <person name="Kawabata A."/>
            <person name="Hikiji T."/>
            <person name="Kobatake N."/>
            <person name="Inagaki H."/>
            <person name="Ikema Y."/>
            <person name="Okamoto S."/>
            <person name="Okitani R."/>
            <person name="Kawakami T."/>
            <person name="Noguchi S."/>
            <person name="Itoh T."/>
            <person name="Shigeta K."/>
            <person name="Senba T."/>
            <person name="Matsumura K."/>
            <person name="Nakajima Y."/>
            <person name="Mizuno T."/>
            <person name="Morinaga M."/>
            <person name="Sasaki M."/>
            <person name="Togashi T."/>
            <person name="Oyama M."/>
            <person name="Hata H."/>
            <person name="Watanabe M."/>
            <person name="Komatsu T."/>
            <person name="Mizushima-Sugano J."/>
            <person name="Satoh T."/>
            <person name="Shirai Y."/>
            <person name="Takahashi Y."/>
            <person name="Nakagawa K."/>
            <person name="Okumura K."/>
            <person name="Nagase T."/>
            <person name="Nomura N."/>
            <person name="Kikuchi H."/>
            <person name="Masuho Y."/>
            <person name="Yamashita R."/>
            <person name="Nakai K."/>
            <person name="Yada T."/>
            <person name="Nakamura Y."/>
            <person name="Ohara O."/>
            <person name="Isogai T."/>
            <person name="Sugano S."/>
        </authorList>
    </citation>
    <scope>NUCLEOTIDE SEQUENCE [LARGE SCALE MRNA] (ISOFORMS 1 AND 4)</scope>
    <source>
        <tissue>Amygdala</tissue>
        <tissue>Placenta</tissue>
    </source>
</reference>
<reference key="2">
    <citation type="journal article" date="2006" name="Nature">
        <title>DNA sequence and analysis of human chromosome 8.</title>
        <authorList>
            <person name="Nusbaum C."/>
            <person name="Mikkelsen T.S."/>
            <person name="Zody M.C."/>
            <person name="Asakawa S."/>
            <person name="Taudien S."/>
            <person name="Garber M."/>
            <person name="Kodira C.D."/>
            <person name="Schueler M.G."/>
            <person name="Shimizu A."/>
            <person name="Whittaker C.A."/>
            <person name="Chang J.L."/>
            <person name="Cuomo C.A."/>
            <person name="Dewar K."/>
            <person name="FitzGerald M.G."/>
            <person name="Yang X."/>
            <person name="Allen N.R."/>
            <person name="Anderson S."/>
            <person name="Asakawa T."/>
            <person name="Blechschmidt K."/>
            <person name="Bloom T."/>
            <person name="Borowsky M.L."/>
            <person name="Butler J."/>
            <person name="Cook A."/>
            <person name="Corum B."/>
            <person name="DeArellano K."/>
            <person name="DeCaprio D."/>
            <person name="Dooley K.T."/>
            <person name="Dorris L. III"/>
            <person name="Engels R."/>
            <person name="Gloeckner G."/>
            <person name="Hafez N."/>
            <person name="Hagopian D.S."/>
            <person name="Hall J.L."/>
            <person name="Ishikawa S.K."/>
            <person name="Jaffe D.B."/>
            <person name="Kamat A."/>
            <person name="Kudoh J."/>
            <person name="Lehmann R."/>
            <person name="Lokitsang T."/>
            <person name="Macdonald P."/>
            <person name="Major J.E."/>
            <person name="Matthews C.D."/>
            <person name="Mauceli E."/>
            <person name="Menzel U."/>
            <person name="Mihalev A.H."/>
            <person name="Minoshima S."/>
            <person name="Murayama Y."/>
            <person name="Naylor J.W."/>
            <person name="Nicol R."/>
            <person name="Nguyen C."/>
            <person name="O'Leary S.B."/>
            <person name="O'Neill K."/>
            <person name="Parker S.C.J."/>
            <person name="Polley A."/>
            <person name="Raymond C.K."/>
            <person name="Reichwald K."/>
            <person name="Rodriguez J."/>
            <person name="Sasaki T."/>
            <person name="Schilhabel M."/>
            <person name="Siddiqui R."/>
            <person name="Smith C.L."/>
            <person name="Sneddon T.P."/>
            <person name="Talamas J.A."/>
            <person name="Tenzin P."/>
            <person name="Topham K."/>
            <person name="Venkataraman V."/>
            <person name="Wen G."/>
            <person name="Yamazaki S."/>
            <person name="Young S.K."/>
            <person name="Zeng Q."/>
            <person name="Zimmer A.R."/>
            <person name="Rosenthal A."/>
            <person name="Birren B.W."/>
            <person name="Platzer M."/>
            <person name="Shimizu N."/>
            <person name="Lander E.S."/>
        </authorList>
    </citation>
    <scope>NUCLEOTIDE SEQUENCE [LARGE SCALE GENOMIC DNA]</scope>
</reference>
<reference key="3">
    <citation type="submission" date="2005-09" db="EMBL/GenBank/DDBJ databases">
        <authorList>
            <person name="Mural R.J."/>
            <person name="Istrail S."/>
            <person name="Sutton G.G."/>
            <person name="Florea L."/>
            <person name="Halpern A.L."/>
            <person name="Mobarry C.M."/>
            <person name="Lippert R."/>
            <person name="Walenz B."/>
            <person name="Shatkay H."/>
            <person name="Dew I."/>
            <person name="Miller J.R."/>
            <person name="Flanigan M.J."/>
            <person name="Edwards N.J."/>
            <person name="Bolanos R."/>
            <person name="Fasulo D."/>
            <person name="Halldorsson B.V."/>
            <person name="Hannenhalli S."/>
            <person name="Turner R."/>
            <person name="Yooseph S."/>
            <person name="Lu F."/>
            <person name="Nusskern D.R."/>
            <person name="Shue B.C."/>
            <person name="Zheng X.H."/>
            <person name="Zhong F."/>
            <person name="Delcher A.L."/>
            <person name="Huson D.H."/>
            <person name="Kravitz S.A."/>
            <person name="Mouchard L."/>
            <person name="Reinert K."/>
            <person name="Remington K.A."/>
            <person name="Clark A.G."/>
            <person name="Waterman M.S."/>
            <person name="Eichler E.E."/>
            <person name="Adams M.D."/>
            <person name="Hunkapiller M.W."/>
            <person name="Myers E.W."/>
            <person name="Venter J.C."/>
        </authorList>
    </citation>
    <scope>NUCLEOTIDE SEQUENCE [LARGE SCALE GENOMIC DNA]</scope>
</reference>
<reference key="4">
    <citation type="journal article" date="2004" name="Genome Res.">
        <title>The status, quality, and expansion of the NIH full-length cDNA project: the Mammalian Gene Collection (MGC).</title>
        <authorList>
            <consortium name="The MGC Project Team"/>
        </authorList>
    </citation>
    <scope>NUCLEOTIDE SEQUENCE [LARGE SCALE MRNA] (ISOFORMS 1; 2; 3; 5 AND 6)</scope>
    <source>
        <tissue>Brain</tissue>
        <tissue>Lung</tissue>
        <tissue>Pancreas</tissue>
        <tissue>Placenta</tissue>
    </source>
</reference>
<reference key="5">
    <citation type="journal article" date="2001" name="Genome Res.">
        <title>Towards a catalog of human genes and proteins: sequencing and analysis of 500 novel complete protein coding human cDNAs.</title>
        <authorList>
            <person name="Wiemann S."/>
            <person name="Weil B."/>
            <person name="Wellenreuther R."/>
            <person name="Gassenhuber J."/>
            <person name="Glassl S."/>
            <person name="Ansorge W."/>
            <person name="Boecher M."/>
            <person name="Bloecker H."/>
            <person name="Bauersachs S."/>
            <person name="Blum H."/>
            <person name="Lauber J."/>
            <person name="Duesterhoeft A."/>
            <person name="Beyer A."/>
            <person name="Koehrer K."/>
            <person name="Strack N."/>
            <person name="Mewes H.-W."/>
            <person name="Ottenwaelder B."/>
            <person name="Obermaier B."/>
            <person name="Tampe J."/>
            <person name="Heubner D."/>
            <person name="Wambutt R."/>
            <person name="Korn B."/>
            <person name="Klein M."/>
            <person name="Poustka A."/>
        </authorList>
    </citation>
    <scope>NUCLEOTIDE SEQUENCE [LARGE SCALE MRNA] OF 1-167 (ISOFORM 1)</scope>
    <source>
        <tissue>Brain</tissue>
    </source>
</reference>
<reference key="6">
    <citation type="submission" date="1999-11" db="EMBL/GenBank/DDBJ databases">
        <title>Interactors of a human homolog of yeast LAG1 gene.</title>
        <authorList>
            <person name="Pan H."/>
            <person name="Xu Z.G."/>
            <person name="Huo K.K."/>
            <person name="Li Y.Y."/>
        </authorList>
    </citation>
    <scope>NUCLEOTIDE SEQUENCE [MRNA] OF 140-258 (ISOFORM 1)</scope>
    <source>
        <tissue>Fetal brain</tissue>
    </source>
</reference>
<reference key="7">
    <citation type="journal article" date="2011" name="BMC Syst. Biol.">
        <title>Initial characterization of the human central proteome.</title>
        <authorList>
            <person name="Burkard T.R."/>
            <person name="Planyavsky M."/>
            <person name="Kaupe I."/>
            <person name="Breitwieser F.P."/>
            <person name="Buerckstuemmer T."/>
            <person name="Bennett K.L."/>
            <person name="Superti-Furga G."/>
            <person name="Colinge J."/>
        </authorList>
    </citation>
    <scope>IDENTIFICATION BY MASS SPECTROMETRY [LARGE SCALE ANALYSIS]</scope>
</reference>
<reference key="8">
    <citation type="journal article" date="2011" name="J. Biol. Chem.">
        <title>RNF170 protein, an endoplasmic reticulum membrane ubiquitin ligase, mediates inositol 1,4,5-trisphosphate receptor ubiquitination and degradation.</title>
        <authorList>
            <person name="Lu J.P."/>
            <person name="Wang Y."/>
            <person name="Sliter D.A."/>
            <person name="Pearce M.M."/>
            <person name="Wojcikiewicz R.J."/>
        </authorList>
    </citation>
    <scope>FUNCTION</scope>
    <scope>SUBCELLULAR LOCATION</scope>
    <scope>TOPOLOGY</scope>
    <scope>INTERACTION WITH ERLIN1/ERLIN2 COMPLEX AND ITPR1</scope>
</reference>
<reference key="9">
    <citation type="journal article" date="2018" name="J. Virol.">
        <title>Transmembrane Protein pUL50 of Human Cytomegalovirus Inhibits ISGylation by Downregulating UBE1L.</title>
        <authorList>
            <person name="Lee M.K."/>
            <person name="Kim Y.J."/>
            <person name="Kim Y.E."/>
            <person name="Han T.H."/>
            <person name="Milbradt J."/>
            <person name="Marschall M."/>
            <person name="Ahn J.H."/>
        </authorList>
    </citation>
    <scope>INTERACTION WITH HUMAN CYTOMEGALOVIRUS PROTEIN NEC2/UL50 (MICROBIAL INFECTION)</scope>
</reference>
<reference key="10">
    <citation type="journal article" date="2020" name="Cell. Mol. Immunol.">
        <title>E3 ubiquitin ligase RNF170 inhibits innate immune responses by targeting and degrading TLR3 in murine cells.</title>
        <authorList>
            <person name="Song X."/>
            <person name="Liu S."/>
            <person name="Wang W."/>
            <person name="Ma Z."/>
            <person name="Cao X."/>
            <person name="Jiang M."/>
        </authorList>
    </citation>
    <scope>FUNCTION</scope>
    <scope>SUBCELLULAR LOCATION</scope>
    <scope>CATALYTIC ACTIVITY</scope>
    <scope>MUTAGENESIS OF CYS-102 AND HIS-104</scope>
</reference>
<reference key="11">
    <citation type="journal article" date="2011" name="Brain">
        <title>A mutation in the RNF170 gene causes autosomal dominant sensory ataxia.</title>
        <authorList>
            <person name="Valdmanis P.N."/>
            <person name="Dupre N."/>
            <person name="Lachance M."/>
            <person name="Stochmanski S.J."/>
            <person name="Belzil V.V."/>
            <person name="Dion P.A."/>
            <person name="Thiffault I."/>
            <person name="Brais B."/>
            <person name="Weston L."/>
            <person name="Saint-Amant L."/>
            <person name="Samuels M.E."/>
            <person name="Rouleau G.A."/>
        </authorList>
    </citation>
    <scope>VARIANT SNAX1 CYS-199</scope>
    <scope>TISSUE SPECIFICITY</scope>
</reference>
<reference key="12">
    <citation type="journal article" date="2019" name="Nat. Commun.">
        <title>Bi-allelic variants in RNF170 are associated with hereditary spastic paraplegia.</title>
        <authorList>
            <person name="Wagner M."/>
            <person name="Osborn D.P.S."/>
            <person name="Gehweiler I."/>
            <person name="Nagel M."/>
            <person name="Ulmer U."/>
            <person name="Bakhtiari S."/>
            <person name="Amouri R."/>
            <person name="Boostani R."/>
            <person name="Hentati F."/>
            <person name="Hockley M.M."/>
            <person name="Hoelbling B."/>
            <person name="Schwarzmayr T."/>
            <person name="Karimiani E.G."/>
            <person name="Kernstock C."/>
            <person name="Maroofian R."/>
            <person name="Mueller-Felber W."/>
            <person name="Ozkan E."/>
            <person name="Padilla-Lopez S."/>
            <person name="Reich S."/>
            <person name="Reichbauer J."/>
            <person name="Darvish H."/>
            <person name="Shahmohammadibeni N."/>
            <person name="Tafakhori A."/>
            <person name="Vill K."/>
            <person name="Zuchner S."/>
            <person name="Kruer M.C."/>
            <person name="Winkelmann J."/>
            <person name="Jamshidi Y."/>
            <person name="Schuele R."/>
        </authorList>
    </citation>
    <scope>VARIANT SPG85 ARG-102</scope>
    <scope>INVOLVEMENT IN SPG85</scope>
</reference>
<reference key="13">
    <citation type="journal article" date="2021" name="Mov. Disord.">
        <title>RNF170-related hereditary spastic paraplegia: confirmation by a novel mutation.</title>
        <authorList>
            <person name="de Sainte Agathe J.M."/>
            <person name="Mercier S."/>
            <person name="Mahe J.Y."/>
            <person name="Pereon Y."/>
            <person name="Buratti J."/>
            <person name="Tissier L."/>
            <person name="Kol B."/>
            <person name="Said S.A."/>
            <person name="Leguern E."/>
            <person name="Banneau G."/>
            <person name="Stevanin G."/>
        </authorList>
    </citation>
    <scope>VARIANT SPG85 114-TYR--ARG-258 DEL</scope>
    <scope>INVOLVEMENT IN SPG85</scope>
</reference>
<reference key="14">
    <citation type="journal article" date="2022" name="Neurogenetics">
        <title>A novel homozygous variant in RNF170 causes hereditary spastic paraplegia: a case report and review of the literature.</title>
        <authorList>
            <person name="Chouery E."/>
            <person name="Mehawej C."/>
            <person name="Megarbane A."/>
        </authorList>
    </citation>
    <scope>VARIANT SPG85 TRP-107</scope>
</reference>
<accession>Q96K19</accession>
<accession>D3DSY6</accession>
<accession>E9PIL4</accession>
<accession>Q7Z483</accession>
<accession>Q86YC0</accession>
<accession>Q8IXR7</accession>
<accession>Q8N2B5</accession>
<accession>Q8N5G9</accession>
<accession>Q8NG30</accession>
<accession>Q9H0V6</accession>
<sequence length="258" mass="29815">MAKYQGEVQSLKLDDDSVIEGVSDQVLVAVVVSFALIATLVYALFRNVHQNIHPENQELVRVLREQLQTEQDAPAATRQQFYTDMYCPICLHQASFPVETNCGHLFCGACIIAYWRYGSWLGAISCPICRQTVTLLLTVFGEDDQSQDVLRLHQDINDYNRRFSGQPRSIMERIMDLPTLLRHAFREMFSVGGLFWMFRIRIILCLMGAFFYLISPLDFVPEALFGILGFLDDFFVIFLLLIYISIMYREVITQRLTR</sequence>
<evidence type="ECO:0000255" key="1"/>
<evidence type="ECO:0000255" key="2">
    <source>
        <dbReference type="PROSITE-ProRule" id="PRU00175"/>
    </source>
</evidence>
<evidence type="ECO:0000269" key="3">
    <source>
    </source>
</evidence>
<evidence type="ECO:0000269" key="4">
    <source>
    </source>
</evidence>
<evidence type="ECO:0000269" key="5">
    <source>
    </source>
</evidence>
<evidence type="ECO:0000269" key="6">
    <source>
    </source>
</evidence>
<evidence type="ECO:0000269" key="7">
    <source>
    </source>
</evidence>
<evidence type="ECO:0000269" key="8">
    <source>
    </source>
</evidence>
<evidence type="ECO:0000269" key="9">
    <source>
    </source>
</evidence>
<evidence type="ECO:0000303" key="10">
    <source>
    </source>
</evidence>
<evidence type="ECO:0000303" key="11">
    <source>
    </source>
</evidence>
<evidence type="ECO:0000305" key="12"/>
<protein>
    <recommendedName>
        <fullName>E3 ubiquitin-protein ligase RNF170</fullName>
        <ecNumber evidence="6">2.3.2.27</ecNumber>
    </recommendedName>
    <alternativeName>
        <fullName>Putative LAG1-interacting protein</fullName>
    </alternativeName>
    <alternativeName>
        <fullName>RING finger protein 170</fullName>
    </alternativeName>
    <alternativeName>
        <fullName evidence="12">RING-type E3 ubiquitin transferase RNF170</fullName>
    </alternativeName>
</protein>
<gene>
    <name type="primary">RNF170</name>
</gene>
<keyword id="KW-0025">Alternative splicing</keyword>
<keyword id="KW-0225">Disease variant</keyword>
<keyword id="KW-0256">Endoplasmic reticulum</keyword>
<keyword id="KW-0890">Hereditary spastic paraplegia</keyword>
<keyword id="KW-0945">Host-virus interaction</keyword>
<keyword id="KW-0472">Membrane</keyword>
<keyword id="KW-0479">Metal-binding</keyword>
<keyword id="KW-0523">Neurodegeneration</keyword>
<keyword id="KW-1267">Proteomics identification</keyword>
<keyword id="KW-1185">Reference proteome</keyword>
<keyword id="KW-0808">Transferase</keyword>
<keyword id="KW-0812">Transmembrane</keyword>
<keyword id="KW-1133">Transmembrane helix</keyword>
<keyword id="KW-0833">Ubl conjugation pathway</keyword>
<keyword id="KW-0862">Zinc</keyword>
<keyword id="KW-0863">Zinc-finger</keyword>
<dbReference type="EC" id="2.3.2.27" evidence="6"/>
<dbReference type="EMBL" id="AK027748">
    <property type="protein sequence ID" value="BAB55340.1"/>
    <property type="molecule type" value="mRNA"/>
</dbReference>
<dbReference type="EMBL" id="AK090864">
    <property type="protein sequence ID" value="BAC03534.1"/>
    <property type="molecule type" value="mRNA"/>
</dbReference>
<dbReference type="EMBL" id="AC009634">
    <property type="status" value="NOT_ANNOTATED_CDS"/>
    <property type="molecule type" value="Genomic_DNA"/>
</dbReference>
<dbReference type="EMBL" id="AC087533">
    <property type="status" value="NOT_ANNOTATED_CDS"/>
    <property type="molecule type" value="Genomic_DNA"/>
</dbReference>
<dbReference type="EMBL" id="CH471080">
    <property type="protein sequence ID" value="EAW63201.1"/>
    <property type="molecule type" value="Genomic_DNA"/>
</dbReference>
<dbReference type="EMBL" id="CH471080">
    <property type="protein sequence ID" value="EAW63203.1"/>
    <property type="molecule type" value="Genomic_DNA"/>
</dbReference>
<dbReference type="EMBL" id="BC013422">
    <property type="protein sequence ID" value="AAH13422.1"/>
    <property type="molecule type" value="mRNA"/>
</dbReference>
<dbReference type="EMBL" id="BC032393">
    <property type="protein sequence ID" value="AAH32393.1"/>
    <property type="molecule type" value="mRNA"/>
</dbReference>
<dbReference type="EMBL" id="BC039461">
    <property type="protein sequence ID" value="AAH39461.1"/>
    <property type="status" value="ALT_INIT"/>
    <property type="molecule type" value="mRNA"/>
</dbReference>
<dbReference type="EMBL" id="BC044566">
    <property type="protein sequence ID" value="AAH44566.1"/>
    <property type="status" value="ALT_INIT"/>
    <property type="molecule type" value="mRNA"/>
</dbReference>
<dbReference type="EMBL" id="BC058289">
    <property type="status" value="NOT_ANNOTATED_CDS"/>
    <property type="molecule type" value="mRNA"/>
</dbReference>
<dbReference type="EMBL" id="AL136620">
    <property type="protein sequence ID" value="CAB66555.1"/>
    <property type="molecule type" value="mRNA"/>
</dbReference>
<dbReference type="EMBL" id="AF209504">
    <property type="protein sequence ID" value="AAM92891.1"/>
    <property type="molecule type" value="mRNA"/>
</dbReference>
<dbReference type="CCDS" id="CCDS55229.1">
    <molecule id="Q96K19-6"/>
</dbReference>
<dbReference type="CCDS" id="CCDS55230.1">
    <molecule id="Q96K19-3"/>
</dbReference>
<dbReference type="CCDS" id="CCDS6138.1">
    <molecule id="Q96K19-1"/>
</dbReference>
<dbReference type="RefSeq" id="NP_001153695.1">
    <molecule id="Q96K19-1"/>
    <property type="nucleotide sequence ID" value="NM_001160223.2"/>
</dbReference>
<dbReference type="RefSeq" id="NP_001153696.1">
    <molecule id="Q96K19-3"/>
    <property type="nucleotide sequence ID" value="NM_001160224.2"/>
</dbReference>
<dbReference type="RefSeq" id="NP_001153697.1">
    <molecule id="Q96K19-6"/>
    <property type="nucleotide sequence ID" value="NM_001160225.2"/>
</dbReference>
<dbReference type="RefSeq" id="NP_112216.3">
    <molecule id="Q96K19-1"/>
    <property type="nucleotide sequence ID" value="NM_030954.3"/>
</dbReference>
<dbReference type="RefSeq" id="XP_006716467.1">
    <molecule id="Q96K19-1"/>
    <property type="nucleotide sequence ID" value="XM_006716404.3"/>
</dbReference>
<dbReference type="RefSeq" id="XP_011542968.1">
    <molecule id="Q96K19-1"/>
    <property type="nucleotide sequence ID" value="XM_011544666.4"/>
</dbReference>
<dbReference type="RefSeq" id="XP_016869370.1">
    <molecule id="Q96K19-1"/>
    <property type="nucleotide sequence ID" value="XM_017013881.2"/>
</dbReference>
<dbReference type="RefSeq" id="XP_016869371.1">
    <property type="nucleotide sequence ID" value="XM_017013882.1"/>
</dbReference>
<dbReference type="RefSeq" id="XP_047278235.1">
    <molecule id="Q96K19-1"/>
    <property type="nucleotide sequence ID" value="XM_047422279.1"/>
</dbReference>
<dbReference type="RefSeq" id="XP_047278238.1">
    <molecule id="Q96K19-6"/>
    <property type="nucleotide sequence ID" value="XM_047422282.1"/>
</dbReference>
<dbReference type="RefSeq" id="XP_054217282.1">
    <molecule id="Q96K19-1"/>
    <property type="nucleotide sequence ID" value="XM_054361307.1"/>
</dbReference>
<dbReference type="RefSeq" id="XP_054217283.1">
    <molecule id="Q96K19-1"/>
    <property type="nucleotide sequence ID" value="XM_054361308.1"/>
</dbReference>
<dbReference type="RefSeq" id="XP_054217284.1">
    <molecule id="Q96K19-1"/>
    <property type="nucleotide sequence ID" value="XM_054361309.1"/>
</dbReference>
<dbReference type="RefSeq" id="XP_054217288.1">
    <molecule id="Q96K19-6"/>
    <property type="nucleotide sequence ID" value="XM_054361313.1"/>
</dbReference>
<dbReference type="SMR" id="Q96K19"/>
<dbReference type="BioGRID" id="123583">
    <property type="interactions" value="76"/>
</dbReference>
<dbReference type="CORUM" id="Q96K19"/>
<dbReference type="FunCoup" id="Q96K19">
    <property type="interactions" value="948"/>
</dbReference>
<dbReference type="IntAct" id="Q96K19">
    <property type="interactions" value="48"/>
</dbReference>
<dbReference type="MINT" id="Q96K19"/>
<dbReference type="STRING" id="9606.ENSP00000445725"/>
<dbReference type="iPTMnet" id="Q96K19"/>
<dbReference type="PhosphoSitePlus" id="Q96K19"/>
<dbReference type="BioMuta" id="RNF170"/>
<dbReference type="DMDM" id="134035027"/>
<dbReference type="jPOST" id="Q96K19"/>
<dbReference type="MassIVE" id="Q96K19"/>
<dbReference type="PaxDb" id="9606-ENSP00000445725"/>
<dbReference type="PeptideAtlas" id="Q96K19"/>
<dbReference type="ProteomicsDB" id="20847"/>
<dbReference type="ProteomicsDB" id="77025">
    <molecule id="Q96K19-1"/>
</dbReference>
<dbReference type="ProteomicsDB" id="77026">
    <molecule id="Q96K19-2"/>
</dbReference>
<dbReference type="ProteomicsDB" id="77027">
    <molecule id="Q96K19-3"/>
</dbReference>
<dbReference type="ProteomicsDB" id="77028">
    <molecule id="Q96K19-4"/>
</dbReference>
<dbReference type="ProteomicsDB" id="77029">
    <molecule id="Q96K19-5"/>
</dbReference>
<dbReference type="Pumba" id="Q96K19"/>
<dbReference type="Antibodypedia" id="24165">
    <property type="antibodies" value="119 antibodies from 24 providers"/>
</dbReference>
<dbReference type="DNASU" id="81790"/>
<dbReference type="Ensembl" id="ENST00000240159.8">
    <molecule id="Q96K19-5"/>
    <property type="protein sequence ID" value="ENSP00000240159.4"/>
    <property type="gene ID" value="ENSG00000120925.16"/>
</dbReference>
<dbReference type="Ensembl" id="ENST00000319073.5">
    <molecule id="Q96K19-5"/>
    <property type="protein sequence ID" value="ENSP00000325969.5"/>
    <property type="gene ID" value="ENSG00000120925.16"/>
</dbReference>
<dbReference type="Ensembl" id="ENST00000319104.7">
    <molecule id="Q96K19-3"/>
    <property type="protein sequence ID" value="ENSP00000326138.3"/>
    <property type="gene ID" value="ENSG00000120925.16"/>
</dbReference>
<dbReference type="Ensembl" id="ENST00000526349.5">
    <molecule id="Q96K19-6"/>
    <property type="protein sequence ID" value="ENSP00000435782.1"/>
    <property type="gene ID" value="ENSG00000120925.16"/>
</dbReference>
<dbReference type="Ensembl" id="ENST00000527424.6">
    <molecule id="Q96K19-1"/>
    <property type="protein sequence ID" value="ENSP00000434797.1"/>
    <property type="gene ID" value="ENSG00000120925.16"/>
</dbReference>
<dbReference type="Ensembl" id="ENST00000534961.5">
    <molecule id="Q96K19-1"/>
    <property type="protein sequence ID" value="ENSP00000445725.1"/>
    <property type="gene ID" value="ENSG00000120925.16"/>
</dbReference>
<dbReference type="GeneID" id="81790"/>
<dbReference type="KEGG" id="hsa:81790"/>
<dbReference type="MANE-Select" id="ENST00000527424.6">
    <property type="protein sequence ID" value="ENSP00000434797.1"/>
    <property type="RefSeq nucleotide sequence ID" value="NM_030954.4"/>
    <property type="RefSeq protein sequence ID" value="NP_112216.3"/>
</dbReference>
<dbReference type="UCSC" id="uc003xpm.4">
    <molecule id="Q96K19-1"/>
    <property type="organism name" value="human"/>
</dbReference>
<dbReference type="AGR" id="HGNC:25358"/>
<dbReference type="CTD" id="81790"/>
<dbReference type="DisGeNET" id="81790"/>
<dbReference type="GeneCards" id="RNF170"/>
<dbReference type="HGNC" id="HGNC:25358">
    <property type="gene designation" value="RNF170"/>
</dbReference>
<dbReference type="HPA" id="ENSG00000120925">
    <property type="expression patterns" value="Low tissue specificity"/>
</dbReference>
<dbReference type="MalaCards" id="RNF170"/>
<dbReference type="MIM" id="608984">
    <property type="type" value="phenotype"/>
</dbReference>
<dbReference type="MIM" id="614649">
    <property type="type" value="gene"/>
</dbReference>
<dbReference type="MIM" id="619686">
    <property type="type" value="phenotype"/>
</dbReference>
<dbReference type="neXtProt" id="NX_Q96K19"/>
<dbReference type="OpenTargets" id="ENSG00000120925"/>
<dbReference type="Orphanet" id="631082">
    <property type="disease" value="Autosomal recessive spastic paraplegia type 85"/>
</dbReference>
<dbReference type="PharmGKB" id="PA134922560"/>
<dbReference type="VEuPathDB" id="HostDB:ENSG00000120925"/>
<dbReference type="eggNOG" id="KOG2164">
    <property type="taxonomic scope" value="Eukaryota"/>
</dbReference>
<dbReference type="GeneTree" id="ENSGT00390000017123"/>
<dbReference type="HOGENOM" id="CLU_1365859_0_0_1"/>
<dbReference type="InParanoid" id="Q96K19"/>
<dbReference type="OMA" id="CRQEEQN"/>
<dbReference type="OrthoDB" id="9049620at2759"/>
<dbReference type="PAN-GO" id="Q96K19">
    <property type="GO annotations" value="0 GO annotations based on evolutionary models"/>
</dbReference>
<dbReference type="PhylomeDB" id="Q96K19"/>
<dbReference type="TreeFam" id="TF328342"/>
<dbReference type="PathwayCommons" id="Q96K19"/>
<dbReference type="SignaLink" id="Q96K19"/>
<dbReference type="SIGNOR" id="Q96K19"/>
<dbReference type="UniPathway" id="UPA00143"/>
<dbReference type="BioGRID-ORCS" id="81790">
    <property type="hits" value="6 hits in 1193 CRISPR screens"/>
</dbReference>
<dbReference type="ChiTaRS" id="RNF170">
    <property type="organism name" value="human"/>
</dbReference>
<dbReference type="GenomeRNAi" id="81790"/>
<dbReference type="Pharos" id="Q96K19">
    <property type="development level" value="Tbio"/>
</dbReference>
<dbReference type="PRO" id="PR:Q96K19"/>
<dbReference type="Proteomes" id="UP000005640">
    <property type="component" value="Chromosome 8"/>
</dbReference>
<dbReference type="RNAct" id="Q96K19">
    <property type="molecule type" value="protein"/>
</dbReference>
<dbReference type="Bgee" id="ENSG00000120925">
    <property type="expression patterns" value="Expressed in lateral nuclear group of thalamus and 200 other cell types or tissues"/>
</dbReference>
<dbReference type="ExpressionAtlas" id="Q96K19">
    <property type="expression patterns" value="baseline and differential"/>
</dbReference>
<dbReference type="GO" id="GO:0005789">
    <property type="term" value="C:endoplasmic reticulum membrane"/>
    <property type="evidence" value="ECO:0007669"/>
    <property type="project" value="UniProtKB-SubCell"/>
</dbReference>
<dbReference type="GO" id="GO:0061630">
    <property type="term" value="F:ubiquitin protein ligase activity"/>
    <property type="evidence" value="ECO:0007669"/>
    <property type="project" value="Ensembl"/>
</dbReference>
<dbReference type="GO" id="GO:0008270">
    <property type="term" value="F:zinc ion binding"/>
    <property type="evidence" value="ECO:0007669"/>
    <property type="project" value="UniProtKB-KW"/>
</dbReference>
<dbReference type="GO" id="GO:0007628">
    <property type="term" value="P:adult walking behavior"/>
    <property type="evidence" value="ECO:0007669"/>
    <property type="project" value="Ensembl"/>
</dbReference>
<dbReference type="GO" id="GO:0010467">
    <property type="term" value="P:gene expression"/>
    <property type="evidence" value="ECO:0007669"/>
    <property type="project" value="Ensembl"/>
</dbReference>
<dbReference type="GO" id="GO:0045087">
    <property type="term" value="P:innate immune response"/>
    <property type="evidence" value="ECO:0007669"/>
    <property type="project" value="Ensembl"/>
</dbReference>
<dbReference type="GO" id="GO:0043161">
    <property type="term" value="P:proteasome-mediated ubiquitin-dependent protein catabolic process"/>
    <property type="evidence" value="ECO:0007669"/>
    <property type="project" value="Ensembl"/>
</dbReference>
<dbReference type="GO" id="GO:0070936">
    <property type="term" value="P:protein K48-linked ubiquitination"/>
    <property type="evidence" value="ECO:0007669"/>
    <property type="project" value="Ensembl"/>
</dbReference>
<dbReference type="GO" id="GO:0014823">
    <property type="term" value="P:response to activity"/>
    <property type="evidence" value="ECO:0007669"/>
    <property type="project" value="Ensembl"/>
</dbReference>
<dbReference type="GO" id="GO:0009266">
    <property type="term" value="P:response to temperature stimulus"/>
    <property type="evidence" value="ECO:0007669"/>
    <property type="project" value="Ensembl"/>
</dbReference>
<dbReference type="GO" id="GO:0034138">
    <property type="term" value="P:toll-like receptor 3 signaling pathway"/>
    <property type="evidence" value="ECO:0007669"/>
    <property type="project" value="Ensembl"/>
</dbReference>
<dbReference type="CDD" id="cd16553">
    <property type="entry name" value="RING-HC_RNF170"/>
    <property type="match status" value="1"/>
</dbReference>
<dbReference type="Gene3D" id="3.30.40.10">
    <property type="entry name" value="Zinc/RING finger domain, C3HC4 (zinc finger)"/>
    <property type="match status" value="1"/>
</dbReference>
<dbReference type="InterPro" id="IPR010652">
    <property type="entry name" value="DUF1232"/>
</dbReference>
<dbReference type="InterPro" id="IPR038896">
    <property type="entry name" value="RNF170"/>
</dbReference>
<dbReference type="InterPro" id="IPR027370">
    <property type="entry name" value="Znf-RING_euk"/>
</dbReference>
<dbReference type="InterPro" id="IPR001841">
    <property type="entry name" value="Znf_RING"/>
</dbReference>
<dbReference type="InterPro" id="IPR013083">
    <property type="entry name" value="Znf_RING/FYVE/PHD"/>
</dbReference>
<dbReference type="InterPro" id="IPR017907">
    <property type="entry name" value="Znf_RING_CS"/>
</dbReference>
<dbReference type="PANTHER" id="PTHR22894:SF1">
    <property type="entry name" value="E3 UBIQUITIN-PROTEIN LIGASE RNF170"/>
    <property type="match status" value="1"/>
</dbReference>
<dbReference type="PANTHER" id="PTHR22894">
    <property type="entry name" value="RING-TYPE DOMAIN-CONTAINING PROTEIN"/>
    <property type="match status" value="1"/>
</dbReference>
<dbReference type="Pfam" id="PF06803">
    <property type="entry name" value="DUF1232"/>
    <property type="match status" value="1"/>
</dbReference>
<dbReference type="Pfam" id="PF13445">
    <property type="entry name" value="zf-RING_UBOX"/>
    <property type="match status" value="1"/>
</dbReference>
<dbReference type="SMART" id="SM00184">
    <property type="entry name" value="RING"/>
    <property type="match status" value="1"/>
</dbReference>
<dbReference type="SUPFAM" id="SSF57850">
    <property type="entry name" value="RING/U-box"/>
    <property type="match status" value="1"/>
</dbReference>
<dbReference type="PROSITE" id="PS00518">
    <property type="entry name" value="ZF_RING_1"/>
    <property type="match status" value="1"/>
</dbReference>
<dbReference type="PROSITE" id="PS50089">
    <property type="entry name" value="ZF_RING_2"/>
    <property type="match status" value="1"/>
</dbReference>
<comment type="function">
    <text evidence="4 6">E3 ubiquitin-protein ligase that plays an essential role in stimulus-induced inositol 1,4,5-trisphosphate receptor type 1 (ITPR1) ubiquitination and degradation via the endoplasmic reticulum-associated degradation (ERAD) pathway. Also involved in ITPR1 turnover in resting cells. Selectively inhibits the TLR3-triggered innate immune response by promoting the 'Lys-48'-linked polyubiquitination and degradation of TLR3 (PubMed:31076723).</text>
</comment>
<comment type="catalytic activity">
    <reaction evidence="6">
        <text>S-ubiquitinyl-[E2 ubiquitin-conjugating enzyme]-L-cysteine + [acceptor protein]-L-lysine = [E2 ubiquitin-conjugating enzyme]-L-cysteine + N(6)-ubiquitinyl-[acceptor protein]-L-lysine.</text>
        <dbReference type="EC" id="2.3.2.27"/>
    </reaction>
</comment>
<comment type="pathway">
    <text>Protein modification; protein ubiquitination.</text>
</comment>
<comment type="subunit">
    <text evidence="5">(Microbial infection) Interacts with human cytomegalovirus protein NEC2/UL50; this interaction promotes of UBA7 ubiquitination and subsequent proteasomal degradation.</text>
</comment>
<comment type="subunit">
    <text evidence="4">Constitutively associated with the ERLIN1/ERLIN 2 complex. Interacts with activated ITPR1.</text>
</comment>
<comment type="interaction">
    <interactant intactId="EBI-2130336">
        <id>Q96K19</id>
    </interactant>
    <interactant intactId="EBI-357793">
        <id>P60900</id>
        <label>PSMA6</label>
    </interactant>
    <organismsDiffer>false</organismsDiffer>
    <experiments>3</experiments>
</comment>
<comment type="interaction">
    <interactant intactId="EBI-12055631">
        <id>Q96K19-5</id>
    </interactant>
    <interactant intactId="EBI-8639143">
        <id>Q96LL9</id>
        <label>DNAJC30</label>
    </interactant>
    <organismsDiffer>false</organismsDiffer>
    <experiments>3</experiments>
</comment>
<comment type="interaction">
    <interactant intactId="EBI-12055631">
        <id>Q96K19-5</id>
    </interactant>
    <interactant intactId="EBI-12051643">
        <id>B0YJ81</id>
        <label>HACD1</label>
    </interactant>
    <organismsDiffer>false</organismsDiffer>
    <experiments>3</experiments>
</comment>
<comment type="interaction">
    <interactant intactId="EBI-12055631">
        <id>Q96K19-5</id>
    </interactant>
    <interactant intactId="EBI-11721828">
        <id>Q8IY26</id>
        <label>PLPP6</label>
    </interactant>
    <organismsDiffer>false</organismsDiffer>
    <experiments>3</experiments>
</comment>
<comment type="interaction">
    <interactant intactId="EBI-12055631">
        <id>Q96K19-5</id>
    </interactant>
    <interactant intactId="EBI-347996">
        <id>O43765</id>
        <label>SGTA</label>
    </interactant>
    <organismsDiffer>false</organismsDiffer>
    <experiments>3</experiments>
</comment>
<comment type="interaction">
    <interactant intactId="EBI-12055631">
        <id>Q96K19-5</id>
    </interactant>
    <interactant intactId="EBI-744081">
        <id>Q96EQ0</id>
        <label>SGTB</label>
    </interactant>
    <organismsDiffer>false</organismsDiffer>
    <experiments>3</experiments>
</comment>
<comment type="interaction">
    <interactant intactId="EBI-12055631">
        <id>Q96K19-5</id>
    </interactant>
    <interactant intactId="EBI-1054782">
        <id>Q8TB61</id>
        <label>SLC35B2</label>
    </interactant>
    <organismsDiffer>false</organismsDiffer>
    <experiments>3</experiments>
</comment>
<comment type="interaction">
    <interactant intactId="EBI-12055631">
        <id>Q96K19-5</id>
    </interactant>
    <interactant intactId="EBI-10244848">
        <id>Q5SQN1</id>
        <label>SNAP47</label>
    </interactant>
    <organismsDiffer>false</organismsDiffer>
    <experiments>3</experiments>
</comment>
<comment type="interaction">
    <interactant intactId="EBI-12055631">
        <id>Q96K19-5</id>
    </interactant>
    <interactant intactId="EBI-9819324">
        <id>Q14849</id>
        <label>STARD3</label>
    </interactant>
    <organismsDiffer>false</organismsDiffer>
    <experiments>3</experiments>
</comment>
<comment type="interaction">
    <interactant intactId="EBI-12055631">
        <id>Q96K19-5</id>
    </interactant>
    <interactant intactId="EBI-1057733">
        <id>Q9BVC6</id>
        <label>TMEM109</label>
    </interactant>
    <organismsDiffer>false</organismsDiffer>
    <experiments>3</experiments>
</comment>
<comment type="interaction">
    <interactant intactId="EBI-12055631">
        <id>Q96K19-5</id>
    </interactant>
    <interactant intactId="EBI-12111910">
        <id>Q5BJF2</id>
        <label>TMEM97</label>
    </interactant>
    <organismsDiffer>false</organismsDiffer>
    <experiments>3</experiments>
</comment>
<comment type="interaction">
    <interactant intactId="EBI-12055631">
        <id>Q96K19-5</id>
    </interactant>
    <interactant intactId="EBI-10179682">
        <id>O00526</id>
        <label>UPK2</label>
    </interactant>
    <organismsDiffer>false</organismsDiffer>
    <experiments>3</experiments>
</comment>
<comment type="subcellular location">
    <subcellularLocation>
        <location evidence="4 6">Endoplasmic reticulum membrane</location>
        <topology evidence="4">Multi-pass membrane protein</topology>
    </subcellularLocation>
</comment>
<comment type="alternative products">
    <event type="alternative splicing"/>
    <isoform>
        <id>Q96K19-1</id>
        <name>1</name>
        <sequence type="displayed"/>
    </isoform>
    <isoform>
        <id>Q96K19-2</id>
        <name>2</name>
        <sequence type="described" ref="VSP_023856"/>
    </isoform>
    <isoform>
        <id>Q96K19-3</id>
        <name>3</name>
        <sequence type="described" ref="VSP_023855 VSP_023857"/>
    </isoform>
    <isoform>
        <id>Q96K19-4</id>
        <name>4</name>
        <sequence type="described" ref="VSP_023851 VSP_023852"/>
    </isoform>
    <isoform>
        <id>Q96K19-5</id>
        <name>5</name>
        <sequence type="described" ref="VSP_023853 VSP_023854"/>
    </isoform>
    <isoform>
        <id>Q96K19-6</id>
        <name>6</name>
        <sequence type="described" ref="VSP_044556"/>
    </isoform>
</comment>
<comment type="tissue specificity">
    <text evidence="3">Expressed in the spinal cord.</text>
</comment>
<comment type="disease" evidence="3">
    <disease id="DI-03449">
        <name>Ataxia, sensory, 1, autosomal dominant</name>
        <acronym>SNAX1</acronym>
        <description>A rare disease characterized by progressive ataxia caused by degeneration of the posterior columns of the spinal cord. Affected individuals have a reduced ability to feel pain, temperature and vibration, particularly in the hands and feet. Their most prominent feature is an ataxic gait resulting from a severe loss of proprioception. Thus, patients rely on visual cues for maintaining proper body posture, such that they are unable to remain upright if their eyes are closed (Romberg sign).</description>
        <dbReference type="MIM" id="608984"/>
    </disease>
    <text>The disease is caused by variants affecting the gene represented in this entry.</text>
</comment>
<comment type="disease" evidence="7 8 9">
    <disease id="DI-06303">
        <name>Spastic paraplegia 85, autosomal recessive</name>
        <acronym>SPG85</acronym>
        <description>A form of spastic paraplegia, a neurodegenerative disorder characterized by a slow, gradual, progressive weakness and spasticity of the lower limbs. Rate of progression and the severity of symptoms are quite variable. Initial symptoms may include difficulty with balance, weakness and stiffness in the legs, muscle spasms, and dragging the toes when walking. In some forms of the disorder, bladder symptoms (such as incontinence) may appear, or the weakness and stiffness may spread to other parts of the body. SPG85 is an autosomal recessive form characterized by onset of motor symptoms in the first few years of life. Patients may have upper limb involvement and demonstrate axonal polyneuropathy. Additional features include optic atrophy, dysarthria, dysphagia, ataxia, and urinary incontinence. Brain imaging may show cerebellar atrophy.</description>
        <dbReference type="MIM" id="619686"/>
    </disease>
    <text>The disease is caused by variants affecting the gene represented in this entry.</text>
</comment>
<comment type="sequence caution" evidence="12">
    <conflict type="erroneous initiation">
        <sequence resource="EMBL-CDS" id="AAH39461"/>
    </conflict>
    <text>Extended N-terminus.</text>
</comment>
<comment type="sequence caution" evidence="12">
    <conflict type="erroneous initiation">
        <sequence resource="EMBL-CDS" id="AAH44566"/>
    </conflict>
    <text>Extended N-terminus.</text>
</comment>
<feature type="chain" id="PRO_0000280700" description="E3 ubiquitin-protein ligase RNF170">
    <location>
        <begin position="1"/>
        <end position="258"/>
    </location>
</feature>
<feature type="topological domain" description="Lumenal" evidence="1">
    <location>
        <begin position="1"/>
        <end position="24"/>
    </location>
</feature>
<feature type="transmembrane region" description="Helical" evidence="1">
    <location>
        <begin position="25"/>
        <end position="45"/>
    </location>
</feature>
<feature type="topological domain" description="Cytoplasmic" evidence="1">
    <location>
        <begin position="46"/>
        <end position="201"/>
    </location>
</feature>
<feature type="transmembrane region" description="Helical" evidence="1">
    <location>
        <begin position="202"/>
        <end position="222"/>
    </location>
</feature>
<feature type="topological domain" description="Lumenal" evidence="1">
    <location>
        <position position="223"/>
    </location>
</feature>
<feature type="transmembrane region" description="Helical" evidence="1">
    <location>
        <begin position="224"/>
        <end position="244"/>
    </location>
</feature>
<feature type="topological domain" description="Cytoplasmic" evidence="1">
    <location>
        <begin position="245"/>
        <end position="258"/>
    </location>
</feature>
<feature type="zinc finger region" description="RING-type" evidence="2">
    <location>
        <begin position="87"/>
        <end position="130"/>
    </location>
</feature>
<feature type="splice variant" id="VSP_023851" description="In isoform 4." evidence="10">
    <location>
        <begin position="1"/>
        <end position="96"/>
    </location>
</feature>
<feature type="splice variant" id="VSP_044556" description="In isoform 6." evidence="11">
    <location>
        <begin position="1"/>
        <end position="84"/>
    </location>
</feature>
<feature type="splice variant" id="VSP_023852" description="In isoform 4." evidence="10">
    <original>PVETNCGHLFCGACIIAYWRYGSWLGAISCPICRQT</original>
    <variation>MHLLPLDSSSTLTCTVPSACTKPPSRWRPTVDIFFV</variation>
    <location>
        <begin position="97"/>
        <end position="132"/>
    </location>
</feature>
<feature type="splice variant" id="VSP_023853" description="In isoform 5." evidence="11">
    <original>ACIIAYWR</original>
    <variation>NLTPNSIW</variation>
    <location>
        <begin position="109"/>
        <end position="116"/>
    </location>
</feature>
<feature type="splice variant" id="VSP_023854" description="In isoform 5." evidence="11">
    <location>
        <begin position="117"/>
        <end position="258"/>
    </location>
</feature>
<feature type="splice variant" id="VSP_023855" description="In isoform 3." evidence="11">
    <original>VTLLLTVFGEDDQSQDVLRLHQDINDYNRRFSGQPRSIMERIMDLPTLLRHAFREMFSVGGLFWMFRI</original>
    <variation>GSSEKSSRASEQTHQEAVACLDTQNSPACTVGCRSGPQHIPHDRMLPSASPRLCFTLLDCVSILWFSG</variation>
    <location>
        <begin position="133"/>
        <end position="200"/>
    </location>
</feature>
<feature type="splice variant" id="VSP_023856" description="In isoform 2." evidence="11">
    <original>IMERIMDLPTLLRHAFREMFSVGGLFWMFRIRIILCLMGAFFYLISPLDFVPEALFGILGFLDDFFVIFLLLIYISIMYREVITQRLTR</original>
    <variation>VSNAKACSKLEEDTFLLFCKVRFTNKYSLTMRNLGQAQWLAPIVLALWEAKAGGSLEPRSLRPALET</variation>
    <location>
        <begin position="170"/>
        <end position="258"/>
    </location>
</feature>
<feature type="splice variant" id="VSP_023857" description="In isoform 3." evidence="11">
    <location>
        <begin position="201"/>
        <end position="258"/>
    </location>
</feature>
<feature type="sequence variant" id="VAR_086712" description="In SPG85." evidence="7">
    <original>C</original>
    <variation>R</variation>
    <location>
        <position position="102"/>
    </location>
</feature>
<feature type="sequence variant" id="VAR_086713" description="In SPG85." evidence="9">
    <original>C</original>
    <variation>W</variation>
    <location>
        <position position="107"/>
    </location>
</feature>
<feature type="sequence variant" id="VAR_086714" description="In SPG85." evidence="8">
    <location>
        <begin position="114"/>
        <end position="258"/>
    </location>
</feature>
<feature type="sequence variant" id="VAR_068219" description="In SNAX1; dbSNP:rs397514478." evidence="3">
    <original>R</original>
    <variation>C</variation>
    <location>
        <position position="199"/>
    </location>
</feature>
<feature type="mutagenesis site" description="Complete loss of E3 ligase activity; when associated with A-104." evidence="6">
    <original>C</original>
    <variation>S</variation>
    <location>
        <position position="102"/>
    </location>
</feature>
<feature type="mutagenesis site" description="Complete loss of E3 ligase activity; when associated with S-102." evidence="6">
    <original>H</original>
    <variation>A</variation>
    <location>
        <position position="104"/>
    </location>
</feature>
<feature type="sequence conflict" description="In Ref. 1; BAB55340." evidence="12" ref="1">
    <original>Q</original>
    <variation>H</variation>
    <location>
        <position position="9"/>
    </location>
</feature>
<feature type="sequence conflict" description="In Ref. 4; AAH44566." evidence="12" ref="4">
    <original>P</original>
    <variation>T</variation>
    <location>
        <position position="74"/>
    </location>
</feature>
<feature type="sequence conflict" description="In Ref. 4; AAH44566." evidence="12" ref="4">
    <original>P</original>
    <variation>Q</variation>
    <location>
        <position position="97"/>
    </location>
</feature>
<name>RN170_HUMAN</name>